<feature type="chain" id="PRO_0000349921" description="Ribosomal RNA large subunit methyltransferase F">
    <location>
        <begin position="1"/>
        <end position="336"/>
    </location>
</feature>
<feature type="region of interest" description="Disordered" evidence="2">
    <location>
        <begin position="212"/>
        <end position="234"/>
    </location>
</feature>
<feature type="compositionally biased region" description="Basic residues" evidence="2">
    <location>
        <begin position="212"/>
        <end position="231"/>
    </location>
</feature>
<proteinExistence type="inferred from homology"/>
<comment type="function">
    <text evidence="1">Specifically methylates the adenine in position 1618 of 23S rRNA.</text>
</comment>
<comment type="catalytic activity">
    <reaction evidence="1">
        <text>adenosine(1618) in 23S rRNA + S-adenosyl-L-methionine = N(6)-methyladenosine(1618) in 23S rRNA + S-adenosyl-L-homocysteine + H(+)</text>
        <dbReference type="Rhea" id="RHEA:16497"/>
        <dbReference type="Rhea" id="RHEA-COMP:10229"/>
        <dbReference type="Rhea" id="RHEA-COMP:10231"/>
        <dbReference type="ChEBI" id="CHEBI:15378"/>
        <dbReference type="ChEBI" id="CHEBI:57856"/>
        <dbReference type="ChEBI" id="CHEBI:59789"/>
        <dbReference type="ChEBI" id="CHEBI:74411"/>
        <dbReference type="ChEBI" id="CHEBI:74449"/>
        <dbReference type="EC" id="2.1.1.181"/>
    </reaction>
</comment>
<comment type="subcellular location">
    <subcellularLocation>
        <location evidence="1">Cytoplasm</location>
    </subcellularLocation>
</comment>
<comment type="similarity">
    <text evidence="1">Belongs to the methyltransferase superfamily. METTL16/RlmF family.</text>
</comment>
<sequence>MSQRSLPDEKSGLHPRNRHRQRYDFALLVEAHPPLAAFVRLNQYEDASIDFADAQAVKTLNQALLKCYYGIAAWDIPPQFLCPPIPGRADYVHCLADLLAAGNDGNMPYGGNVRVLDIGTGANLVYPIIGQKEYGWHFVGTDINVEALENAQGIVAANPGLAGAIELRLQRNVGAVFSGVVQESERFDLTMCNPPFHASQAAAMAGTERKWHHLERSRGKPTGKGVRRVRSGRMSGNRLNFGGQAAELYCEGGEEGFISRMIKESAAVGAQCLWFTTLVSKAATLPAVYRSLRAVDAYKVKTIDMAQGQKKSRFVAWTFHDTAGQRAWRRQHWRDV</sequence>
<accession>Q1H501</accession>
<dbReference type="EC" id="2.1.1.181" evidence="1"/>
<dbReference type="EMBL" id="CP000284">
    <property type="protein sequence ID" value="ABE48436.1"/>
    <property type="molecule type" value="Genomic_DNA"/>
</dbReference>
<dbReference type="RefSeq" id="WP_011478533.1">
    <property type="nucleotide sequence ID" value="NC_007947.1"/>
</dbReference>
<dbReference type="SMR" id="Q1H501"/>
<dbReference type="STRING" id="265072.Mfla_0165"/>
<dbReference type="KEGG" id="mfa:Mfla_0165"/>
<dbReference type="eggNOG" id="COG3129">
    <property type="taxonomic scope" value="Bacteria"/>
</dbReference>
<dbReference type="HOGENOM" id="CLU_027534_3_0_4"/>
<dbReference type="OrthoDB" id="1115728at2"/>
<dbReference type="Proteomes" id="UP000002440">
    <property type="component" value="Chromosome"/>
</dbReference>
<dbReference type="GO" id="GO:0005737">
    <property type="term" value="C:cytoplasm"/>
    <property type="evidence" value="ECO:0007669"/>
    <property type="project" value="UniProtKB-SubCell"/>
</dbReference>
<dbReference type="GO" id="GO:0052907">
    <property type="term" value="F:23S rRNA (adenine(1618)-N(6))-methyltransferase activity"/>
    <property type="evidence" value="ECO:0007669"/>
    <property type="project" value="UniProtKB-EC"/>
</dbReference>
<dbReference type="GO" id="GO:0070475">
    <property type="term" value="P:rRNA base methylation"/>
    <property type="evidence" value="ECO:0007669"/>
    <property type="project" value="TreeGrafter"/>
</dbReference>
<dbReference type="CDD" id="cd02440">
    <property type="entry name" value="AdoMet_MTases"/>
    <property type="match status" value="1"/>
</dbReference>
<dbReference type="Gene3D" id="3.40.50.150">
    <property type="entry name" value="Vaccinia Virus protein VP39"/>
    <property type="match status" value="1"/>
</dbReference>
<dbReference type="HAMAP" id="MF_01848">
    <property type="entry name" value="23SrRNA_methyltr_F"/>
    <property type="match status" value="1"/>
</dbReference>
<dbReference type="InterPro" id="IPR010286">
    <property type="entry name" value="METTL16/RlmF"/>
</dbReference>
<dbReference type="InterPro" id="IPR016909">
    <property type="entry name" value="rRNA_lsu_MeTfrase_F"/>
</dbReference>
<dbReference type="InterPro" id="IPR029063">
    <property type="entry name" value="SAM-dependent_MTases_sf"/>
</dbReference>
<dbReference type="NCBIfam" id="NF008725">
    <property type="entry name" value="PRK11727.1"/>
    <property type="match status" value="1"/>
</dbReference>
<dbReference type="PANTHER" id="PTHR13393:SF0">
    <property type="entry name" value="RNA N6-ADENOSINE-METHYLTRANSFERASE METTL16"/>
    <property type="match status" value="1"/>
</dbReference>
<dbReference type="PANTHER" id="PTHR13393">
    <property type="entry name" value="SAM-DEPENDENT METHYLTRANSFERASE"/>
    <property type="match status" value="1"/>
</dbReference>
<dbReference type="Pfam" id="PF05971">
    <property type="entry name" value="Methyltransf_10"/>
    <property type="match status" value="1"/>
</dbReference>
<dbReference type="PIRSF" id="PIRSF029038">
    <property type="entry name" value="Mtase_YbiN_prd"/>
    <property type="match status" value="1"/>
</dbReference>
<dbReference type="SUPFAM" id="SSF53335">
    <property type="entry name" value="S-adenosyl-L-methionine-dependent methyltransferases"/>
    <property type="match status" value="1"/>
</dbReference>
<keyword id="KW-0963">Cytoplasm</keyword>
<keyword id="KW-0489">Methyltransferase</keyword>
<keyword id="KW-1185">Reference proteome</keyword>
<keyword id="KW-0698">rRNA processing</keyword>
<keyword id="KW-0949">S-adenosyl-L-methionine</keyword>
<keyword id="KW-0808">Transferase</keyword>
<reference key="1">
    <citation type="submission" date="2006-03" db="EMBL/GenBank/DDBJ databases">
        <title>Complete sequence of Methylobacillus flagellatus KT.</title>
        <authorList>
            <consortium name="US DOE Joint Genome Institute"/>
            <person name="Copeland A."/>
            <person name="Lucas S."/>
            <person name="Lapidus A."/>
            <person name="Barry K."/>
            <person name="Detter J.C."/>
            <person name="Glavina del Rio T."/>
            <person name="Hammon N."/>
            <person name="Israni S."/>
            <person name="Dalin E."/>
            <person name="Tice H."/>
            <person name="Pitluck S."/>
            <person name="Brettin T."/>
            <person name="Bruce D."/>
            <person name="Han C."/>
            <person name="Tapia R."/>
            <person name="Saunders E."/>
            <person name="Gilna P."/>
            <person name="Schmutz J."/>
            <person name="Larimer F."/>
            <person name="Land M."/>
            <person name="Kyrpides N."/>
            <person name="Anderson I."/>
            <person name="Richardson P."/>
        </authorList>
    </citation>
    <scope>NUCLEOTIDE SEQUENCE [LARGE SCALE GENOMIC DNA]</scope>
    <source>
        <strain>ATCC 51484 / DSM 6875 / VKM B-1610 / KT</strain>
    </source>
</reference>
<evidence type="ECO:0000255" key="1">
    <source>
        <dbReference type="HAMAP-Rule" id="MF_01848"/>
    </source>
</evidence>
<evidence type="ECO:0000256" key="2">
    <source>
        <dbReference type="SAM" id="MobiDB-lite"/>
    </source>
</evidence>
<name>RLMF_METFK</name>
<gene>
    <name evidence="1" type="primary">rlmF</name>
    <name type="ordered locus">Mfla_0165</name>
</gene>
<organism>
    <name type="scientific">Methylobacillus flagellatus (strain ATCC 51484 / DSM 6875 / VKM B-1610 / KT)</name>
    <dbReference type="NCBI Taxonomy" id="265072"/>
    <lineage>
        <taxon>Bacteria</taxon>
        <taxon>Pseudomonadati</taxon>
        <taxon>Pseudomonadota</taxon>
        <taxon>Betaproteobacteria</taxon>
        <taxon>Nitrosomonadales</taxon>
        <taxon>Methylophilaceae</taxon>
        <taxon>Methylobacillus</taxon>
    </lineage>
</organism>
<protein>
    <recommendedName>
        <fullName evidence="1">Ribosomal RNA large subunit methyltransferase F</fullName>
        <ecNumber evidence="1">2.1.1.181</ecNumber>
    </recommendedName>
    <alternativeName>
        <fullName evidence="1">23S rRNA mA1618 methyltransferase</fullName>
    </alternativeName>
    <alternativeName>
        <fullName evidence="1">rRNA adenine N-6-methyltransferase</fullName>
    </alternativeName>
</protein>